<reference key="1">
    <citation type="submission" date="2006-06" db="EMBL/GenBank/DDBJ databases">
        <title>LGLA, the large glycolipid of Spirochaeta aurantia.</title>
        <authorList>
            <person name="Paul C.J."/>
            <person name="Vinogradov E."/>
            <person name="Tapping R.I."/>
            <person name="Perry M.B."/>
            <person name="Moyles D."/>
            <person name="Kropinski A.M."/>
        </authorList>
    </citation>
    <scope>NUCLEOTIDE SEQUENCE [GENOMIC DNA]</scope>
</reference>
<keyword id="KW-0058">Aromatic hydrocarbons catabolism</keyword>
<keyword id="KW-0456">Lyase</keyword>
<keyword id="KW-0464">Manganese</keyword>
<keyword id="KW-0479">Metal-binding</keyword>
<name>HOA_SPIAU</name>
<evidence type="ECO:0000255" key="1">
    <source>
        <dbReference type="HAMAP-Rule" id="MF_01656"/>
    </source>
</evidence>
<organism>
    <name type="scientific">Spirochaeta aurantia</name>
    <dbReference type="NCBI Taxonomy" id="147"/>
    <lineage>
        <taxon>Bacteria</taxon>
        <taxon>Pseudomonadati</taxon>
        <taxon>Spirochaetota</taxon>
        <taxon>Spirochaetia</taxon>
        <taxon>Spirochaetales</taxon>
        <taxon>Spirochaetaceae</taxon>
        <taxon>Spirochaeta</taxon>
    </lineage>
</organism>
<dbReference type="EC" id="4.1.3.39" evidence="1"/>
<dbReference type="EMBL" id="DQ832182">
    <property type="protein sequence ID" value="ABH03012.1"/>
    <property type="molecule type" value="Genomic_DNA"/>
</dbReference>
<dbReference type="SMR" id="Q0PHX9"/>
<dbReference type="GO" id="GO:0003852">
    <property type="term" value="F:2-isopropylmalate synthase activity"/>
    <property type="evidence" value="ECO:0007669"/>
    <property type="project" value="TreeGrafter"/>
</dbReference>
<dbReference type="GO" id="GO:0008701">
    <property type="term" value="F:4-hydroxy-2-oxovalerate aldolase activity"/>
    <property type="evidence" value="ECO:0007669"/>
    <property type="project" value="UniProtKB-UniRule"/>
</dbReference>
<dbReference type="GO" id="GO:0030145">
    <property type="term" value="F:manganese ion binding"/>
    <property type="evidence" value="ECO:0007669"/>
    <property type="project" value="UniProtKB-UniRule"/>
</dbReference>
<dbReference type="GO" id="GO:0009056">
    <property type="term" value="P:catabolic process"/>
    <property type="evidence" value="ECO:0007669"/>
    <property type="project" value="UniProtKB-KW"/>
</dbReference>
<dbReference type="GO" id="GO:0009098">
    <property type="term" value="P:L-leucine biosynthetic process"/>
    <property type="evidence" value="ECO:0007669"/>
    <property type="project" value="TreeGrafter"/>
</dbReference>
<dbReference type="CDD" id="cd07943">
    <property type="entry name" value="DRE_TIM_HOA"/>
    <property type="match status" value="1"/>
</dbReference>
<dbReference type="Gene3D" id="1.10.8.60">
    <property type="match status" value="1"/>
</dbReference>
<dbReference type="Gene3D" id="3.20.20.70">
    <property type="entry name" value="Aldolase class I"/>
    <property type="match status" value="1"/>
</dbReference>
<dbReference type="HAMAP" id="MF_01656">
    <property type="entry name" value="HOA"/>
    <property type="match status" value="1"/>
</dbReference>
<dbReference type="InterPro" id="IPR050073">
    <property type="entry name" value="2-IPM_HCS-like"/>
</dbReference>
<dbReference type="InterPro" id="IPR017629">
    <property type="entry name" value="4OH_2_O-val_aldolase"/>
</dbReference>
<dbReference type="InterPro" id="IPR013785">
    <property type="entry name" value="Aldolase_TIM"/>
</dbReference>
<dbReference type="InterPro" id="IPR012425">
    <property type="entry name" value="DmpG_comm"/>
</dbReference>
<dbReference type="InterPro" id="IPR035685">
    <property type="entry name" value="DRE_TIM_HOA"/>
</dbReference>
<dbReference type="InterPro" id="IPR000891">
    <property type="entry name" value="PYR_CT"/>
</dbReference>
<dbReference type="NCBIfam" id="TIGR03217">
    <property type="entry name" value="4OH_2_O_val_ald"/>
    <property type="match status" value="1"/>
</dbReference>
<dbReference type="NCBIfam" id="NF006049">
    <property type="entry name" value="PRK08195.1"/>
    <property type="match status" value="1"/>
</dbReference>
<dbReference type="PANTHER" id="PTHR10277:SF9">
    <property type="entry name" value="2-ISOPROPYLMALATE SYNTHASE 1, CHLOROPLASTIC-RELATED"/>
    <property type="match status" value="1"/>
</dbReference>
<dbReference type="PANTHER" id="PTHR10277">
    <property type="entry name" value="HOMOCITRATE SYNTHASE-RELATED"/>
    <property type="match status" value="1"/>
</dbReference>
<dbReference type="Pfam" id="PF07836">
    <property type="entry name" value="DmpG_comm"/>
    <property type="match status" value="1"/>
</dbReference>
<dbReference type="Pfam" id="PF00682">
    <property type="entry name" value="HMGL-like"/>
    <property type="match status" value="1"/>
</dbReference>
<dbReference type="SUPFAM" id="SSF51569">
    <property type="entry name" value="Aldolase"/>
    <property type="match status" value="1"/>
</dbReference>
<dbReference type="SUPFAM" id="SSF89000">
    <property type="entry name" value="post-HMGL domain-like"/>
    <property type="match status" value="1"/>
</dbReference>
<dbReference type="PROSITE" id="PS50991">
    <property type="entry name" value="PYR_CT"/>
    <property type="match status" value="1"/>
</dbReference>
<proteinExistence type="inferred from homology"/>
<protein>
    <recommendedName>
        <fullName evidence="1">4-hydroxy-2-oxovalerate aldolase</fullName>
        <shortName evidence="1">HOA</shortName>
        <ecNumber evidence="1">4.1.3.39</ecNumber>
    </recommendedName>
    <alternativeName>
        <fullName evidence="1">4-hydroxy-2-keto-pentanoic acid aldolase</fullName>
    </alternativeName>
    <alternativeName>
        <fullName evidence="1">4-hydroxy-2-oxopentanoate aldolase</fullName>
    </alternativeName>
</protein>
<sequence>MSNSNRPAVVITDSTLRDGNHAVSHQLRASDIASYCQWAEAAHVPIVEVGHGNGLAASSLQVGLAACSDQMMLETARMHLKTSRLGIHVIPGFATVAKDLKPALDLGVDVVRVASHCTEADITERHIGYCRDQGKTVFGVLMMSHMAEVPVLCEEAKKLEAYGAEAVIIMDSSGTYLPLDVTRRVSALKESIGIGVGFHAHNNLGMAIANSIAAIEAGAVLIDGSIRGFGAGAGNAQLETLVAVLERLGVATGIDLYRVLDAGDFAETLFVKELPVVRSLSIVSGLSGVFSGFSKPVLRIASENGVDPRDVFFELGRRRAVAGQEDLILEVVKEIKSRGNR</sequence>
<feature type="chain" id="PRO_0000387923" description="4-hydroxy-2-oxovalerate aldolase">
    <location>
        <begin position="1"/>
        <end position="341"/>
    </location>
</feature>
<feature type="domain" description="Pyruvate carboxyltransferase" evidence="1">
    <location>
        <begin position="9"/>
        <end position="260"/>
    </location>
</feature>
<feature type="active site" description="Proton acceptor" evidence="1">
    <location>
        <position position="21"/>
    </location>
</feature>
<feature type="binding site" evidence="1">
    <location>
        <begin position="17"/>
        <end position="18"/>
    </location>
    <ligand>
        <name>substrate</name>
    </ligand>
</feature>
<feature type="binding site" evidence="1">
    <location>
        <position position="18"/>
    </location>
    <ligand>
        <name>Mn(2+)</name>
        <dbReference type="ChEBI" id="CHEBI:29035"/>
    </ligand>
</feature>
<feature type="binding site" evidence="1">
    <location>
        <position position="172"/>
    </location>
    <ligand>
        <name>substrate</name>
    </ligand>
</feature>
<feature type="binding site" evidence="1">
    <location>
        <position position="199"/>
    </location>
    <ligand>
        <name>Mn(2+)</name>
        <dbReference type="ChEBI" id="CHEBI:29035"/>
    </ligand>
</feature>
<feature type="binding site" evidence="1">
    <location>
        <position position="199"/>
    </location>
    <ligand>
        <name>substrate</name>
    </ligand>
</feature>
<feature type="binding site" evidence="1">
    <location>
        <position position="201"/>
    </location>
    <ligand>
        <name>Mn(2+)</name>
        <dbReference type="ChEBI" id="CHEBI:29035"/>
    </ligand>
</feature>
<feature type="site" description="Transition state stabilizer" evidence="1">
    <location>
        <position position="17"/>
    </location>
</feature>
<comment type="catalytic activity">
    <reaction evidence="1">
        <text>(S)-4-hydroxy-2-oxopentanoate = acetaldehyde + pyruvate</text>
        <dbReference type="Rhea" id="RHEA:22624"/>
        <dbReference type="ChEBI" id="CHEBI:15343"/>
        <dbReference type="ChEBI" id="CHEBI:15361"/>
        <dbReference type="ChEBI" id="CHEBI:73143"/>
        <dbReference type="EC" id="4.1.3.39"/>
    </reaction>
</comment>
<comment type="similarity">
    <text evidence="1">Belongs to the 4-hydroxy-2-oxovalerate aldolase family.</text>
</comment>
<accession>Q0PHX9</accession>